<dbReference type="EC" id="2.4.2.18" evidence="1"/>
<dbReference type="EMBL" id="CP000139">
    <property type="protein sequence ID" value="ABR41692.1"/>
    <property type="molecule type" value="Genomic_DNA"/>
</dbReference>
<dbReference type="RefSeq" id="WP_005839783.1">
    <property type="nucleotide sequence ID" value="NZ_JANSWM010000087.1"/>
</dbReference>
<dbReference type="SMR" id="A6L7M8"/>
<dbReference type="STRING" id="435590.BVU_4090"/>
<dbReference type="PaxDb" id="435590-BVU_4090"/>
<dbReference type="GeneID" id="93448104"/>
<dbReference type="KEGG" id="bvu:BVU_4090"/>
<dbReference type="eggNOG" id="COG0547">
    <property type="taxonomic scope" value="Bacteria"/>
</dbReference>
<dbReference type="HOGENOM" id="CLU_034315_3_1_10"/>
<dbReference type="BioCyc" id="BVUL435590:G1G59-4229-MONOMER"/>
<dbReference type="UniPathway" id="UPA00035">
    <property type="reaction ID" value="UER00041"/>
</dbReference>
<dbReference type="Proteomes" id="UP000002861">
    <property type="component" value="Chromosome"/>
</dbReference>
<dbReference type="GO" id="GO:0005829">
    <property type="term" value="C:cytosol"/>
    <property type="evidence" value="ECO:0007669"/>
    <property type="project" value="TreeGrafter"/>
</dbReference>
<dbReference type="GO" id="GO:0004048">
    <property type="term" value="F:anthranilate phosphoribosyltransferase activity"/>
    <property type="evidence" value="ECO:0007669"/>
    <property type="project" value="UniProtKB-UniRule"/>
</dbReference>
<dbReference type="GO" id="GO:0000287">
    <property type="term" value="F:magnesium ion binding"/>
    <property type="evidence" value="ECO:0007669"/>
    <property type="project" value="UniProtKB-UniRule"/>
</dbReference>
<dbReference type="GO" id="GO:0000162">
    <property type="term" value="P:L-tryptophan biosynthetic process"/>
    <property type="evidence" value="ECO:0007669"/>
    <property type="project" value="UniProtKB-UniRule"/>
</dbReference>
<dbReference type="Gene3D" id="3.40.1030.10">
    <property type="entry name" value="Nucleoside phosphorylase/phosphoribosyltransferase catalytic domain"/>
    <property type="match status" value="1"/>
</dbReference>
<dbReference type="Gene3D" id="1.20.970.10">
    <property type="entry name" value="Transferase, Pyrimidine Nucleoside Phosphorylase, Chain C"/>
    <property type="match status" value="1"/>
</dbReference>
<dbReference type="HAMAP" id="MF_00211">
    <property type="entry name" value="TrpD"/>
    <property type="match status" value="1"/>
</dbReference>
<dbReference type="InterPro" id="IPR005940">
    <property type="entry name" value="Anthranilate_Pribosyl_Tfrase"/>
</dbReference>
<dbReference type="InterPro" id="IPR000312">
    <property type="entry name" value="Glycosyl_Trfase_fam3"/>
</dbReference>
<dbReference type="InterPro" id="IPR017459">
    <property type="entry name" value="Glycosyl_Trfase_fam3_N_dom"/>
</dbReference>
<dbReference type="InterPro" id="IPR036320">
    <property type="entry name" value="Glycosyl_Trfase_fam3_N_dom_sf"/>
</dbReference>
<dbReference type="InterPro" id="IPR035902">
    <property type="entry name" value="Nuc_phospho_transferase"/>
</dbReference>
<dbReference type="NCBIfam" id="TIGR01245">
    <property type="entry name" value="trpD"/>
    <property type="match status" value="1"/>
</dbReference>
<dbReference type="PANTHER" id="PTHR43285">
    <property type="entry name" value="ANTHRANILATE PHOSPHORIBOSYLTRANSFERASE"/>
    <property type="match status" value="1"/>
</dbReference>
<dbReference type="PANTHER" id="PTHR43285:SF2">
    <property type="entry name" value="ANTHRANILATE PHOSPHORIBOSYLTRANSFERASE"/>
    <property type="match status" value="1"/>
</dbReference>
<dbReference type="Pfam" id="PF02885">
    <property type="entry name" value="Glycos_trans_3N"/>
    <property type="match status" value="1"/>
</dbReference>
<dbReference type="Pfam" id="PF00591">
    <property type="entry name" value="Glycos_transf_3"/>
    <property type="match status" value="1"/>
</dbReference>
<dbReference type="SUPFAM" id="SSF52418">
    <property type="entry name" value="Nucleoside phosphorylase/phosphoribosyltransferase catalytic domain"/>
    <property type="match status" value="1"/>
</dbReference>
<dbReference type="SUPFAM" id="SSF47648">
    <property type="entry name" value="Nucleoside phosphorylase/phosphoribosyltransferase N-terminal domain"/>
    <property type="match status" value="1"/>
</dbReference>
<name>TRPD_PHOV8</name>
<protein>
    <recommendedName>
        <fullName evidence="1">Anthranilate phosphoribosyltransferase</fullName>
        <ecNumber evidence="1">2.4.2.18</ecNumber>
    </recommendedName>
</protein>
<gene>
    <name evidence="1" type="primary">trpD</name>
    <name type="ordered locus">BVU_4090</name>
</gene>
<comment type="function">
    <text evidence="1">Catalyzes the transfer of the phosphoribosyl group of 5-phosphorylribose-1-pyrophosphate (PRPP) to anthranilate to yield N-(5'-phosphoribosyl)-anthranilate (PRA).</text>
</comment>
<comment type="catalytic activity">
    <reaction evidence="1">
        <text>N-(5-phospho-beta-D-ribosyl)anthranilate + diphosphate = 5-phospho-alpha-D-ribose 1-diphosphate + anthranilate</text>
        <dbReference type="Rhea" id="RHEA:11768"/>
        <dbReference type="ChEBI" id="CHEBI:16567"/>
        <dbReference type="ChEBI" id="CHEBI:18277"/>
        <dbReference type="ChEBI" id="CHEBI:33019"/>
        <dbReference type="ChEBI" id="CHEBI:58017"/>
        <dbReference type="EC" id="2.4.2.18"/>
    </reaction>
</comment>
<comment type="cofactor">
    <cofactor evidence="1">
        <name>Mg(2+)</name>
        <dbReference type="ChEBI" id="CHEBI:18420"/>
    </cofactor>
    <text evidence="1">Binds 2 magnesium ions per monomer.</text>
</comment>
<comment type="pathway">
    <text evidence="1">Amino-acid biosynthesis; L-tryptophan biosynthesis; L-tryptophan from chorismate: step 2/5.</text>
</comment>
<comment type="subunit">
    <text evidence="1">Homodimer.</text>
</comment>
<comment type="similarity">
    <text evidence="1">Belongs to the anthranilate phosphoribosyltransferase family.</text>
</comment>
<feature type="chain" id="PRO_1000099781" description="Anthranilate phosphoribosyltransferase">
    <location>
        <begin position="1"/>
        <end position="331"/>
    </location>
</feature>
<feature type="binding site" evidence="1">
    <location>
        <position position="79"/>
    </location>
    <ligand>
        <name>5-phospho-alpha-D-ribose 1-diphosphate</name>
        <dbReference type="ChEBI" id="CHEBI:58017"/>
    </ligand>
</feature>
<feature type="binding site" evidence="1">
    <location>
        <position position="79"/>
    </location>
    <ligand>
        <name>anthranilate</name>
        <dbReference type="ChEBI" id="CHEBI:16567"/>
        <label>1</label>
    </ligand>
</feature>
<feature type="binding site" evidence="1">
    <location>
        <begin position="82"/>
        <end position="83"/>
    </location>
    <ligand>
        <name>5-phospho-alpha-D-ribose 1-diphosphate</name>
        <dbReference type="ChEBI" id="CHEBI:58017"/>
    </ligand>
</feature>
<feature type="binding site" evidence="1">
    <location>
        <position position="87"/>
    </location>
    <ligand>
        <name>5-phospho-alpha-D-ribose 1-diphosphate</name>
        <dbReference type="ChEBI" id="CHEBI:58017"/>
    </ligand>
</feature>
<feature type="binding site" evidence="1">
    <location>
        <begin position="89"/>
        <end position="92"/>
    </location>
    <ligand>
        <name>5-phospho-alpha-D-ribose 1-diphosphate</name>
        <dbReference type="ChEBI" id="CHEBI:58017"/>
    </ligand>
</feature>
<feature type="binding site" evidence="1">
    <location>
        <position position="91"/>
    </location>
    <ligand>
        <name>Mg(2+)</name>
        <dbReference type="ChEBI" id="CHEBI:18420"/>
        <label>1</label>
    </ligand>
</feature>
<feature type="binding site" evidence="1">
    <location>
        <begin position="107"/>
        <end position="115"/>
    </location>
    <ligand>
        <name>5-phospho-alpha-D-ribose 1-diphosphate</name>
        <dbReference type="ChEBI" id="CHEBI:58017"/>
    </ligand>
</feature>
<feature type="binding site" evidence="1">
    <location>
        <position position="110"/>
    </location>
    <ligand>
        <name>anthranilate</name>
        <dbReference type="ChEBI" id="CHEBI:16567"/>
        <label>1</label>
    </ligand>
</feature>
<feature type="binding site" evidence="1">
    <location>
        <position position="119"/>
    </location>
    <ligand>
        <name>5-phospho-alpha-D-ribose 1-diphosphate</name>
        <dbReference type="ChEBI" id="CHEBI:58017"/>
    </ligand>
</feature>
<feature type="binding site" evidence="1">
    <location>
        <position position="165"/>
    </location>
    <ligand>
        <name>anthranilate</name>
        <dbReference type="ChEBI" id="CHEBI:16567"/>
        <label>2</label>
    </ligand>
</feature>
<feature type="binding site" evidence="1">
    <location>
        <position position="223"/>
    </location>
    <ligand>
        <name>Mg(2+)</name>
        <dbReference type="ChEBI" id="CHEBI:18420"/>
        <label>2</label>
    </ligand>
</feature>
<feature type="binding site" evidence="1">
    <location>
        <position position="224"/>
    </location>
    <ligand>
        <name>Mg(2+)</name>
        <dbReference type="ChEBI" id="CHEBI:18420"/>
        <label>1</label>
    </ligand>
</feature>
<feature type="binding site" evidence="1">
    <location>
        <position position="224"/>
    </location>
    <ligand>
        <name>Mg(2+)</name>
        <dbReference type="ChEBI" id="CHEBI:18420"/>
        <label>2</label>
    </ligand>
</feature>
<keyword id="KW-0028">Amino-acid biosynthesis</keyword>
<keyword id="KW-0057">Aromatic amino acid biosynthesis</keyword>
<keyword id="KW-0328">Glycosyltransferase</keyword>
<keyword id="KW-0460">Magnesium</keyword>
<keyword id="KW-0479">Metal-binding</keyword>
<keyword id="KW-0808">Transferase</keyword>
<keyword id="KW-0822">Tryptophan biosynthesis</keyword>
<sequence length="331" mass="36461">MKAILSRLFNHEELTRKEAKNLLLNITRGMYNDAQIAALLTVFQMRGIKVEELIGFREALLTTRIPIDFSAYTPIDIVGTGGDGKNTFNISTCACFIVAGAGYHVAKHGNYGATSVSGASNVIEQHGVKFTNNPDKLTRSMEECGMVYMHAQLFNPAMKSVGPVRKALQVRTIFNLLGPLVNPCLPAYQLLGVADLPQMRLYTNVFQKLGIGFAVVNNLDGYDEISLTDEFKVMTNRYETIYKPSELGFSLARQEELYGGNTPEEASKIFNNVLENKATKAQTDCVLINASFAIQAMEPAKPIEECVAIARESLESGKALNTLKKFVELNS</sequence>
<reference key="1">
    <citation type="journal article" date="2007" name="PLoS Biol.">
        <title>Evolution of symbiotic bacteria in the distal human intestine.</title>
        <authorList>
            <person name="Xu J."/>
            <person name="Mahowald M.A."/>
            <person name="Ley R.E."/>
            <person name="Lozupone C.A."/>
            <person name="Hamady M."/>
            <person name="Martens E.C."/>
            <person name="Henrissat B."/>
            <person name="Coutinho P.M."/>
            <person name="Minx P."/>
            <person name="Latreille P."/>
            <person name="Cordum H."/>
            <person name="Van Brunt A."/>
            <person name="Kim K."/>
            <person name="Fulton R.S."/>
            <person name="Fulton L.A."/>
            <person name="Clifton S.W."/>
            <person name="Wilson R.K."/>
            <person name="Knight R.D."/>
            <person name="Gordon J.I."/>
        </authorList>
    </citation>
    <scope>NUCLEOTIDE SEQUENCE [LARGE SCALE GENOMIC DNA]</scope>
    <source>
        <strain>ATCC 8482 / DSM 1447 / JCM 5826 / CCUG 4940 / NBRC 14291 / NCTC 11154</strain>
    </source>
</reference>
<evidence type="ECO:0000255" key="1">
    <source>
        <dbReference type="HAMAP-Rule" id="MF_00211"/>
    </source>
</evidence>
<organism>
    <name type="scientific">Phocaeicola vulgatus (strain ATCC 8482 / DSM 1447 / JCM 5826 / CCUG 4940 / NBRC 14291 / NCTC 11154)</name>
    <name type="common">Bacteroides vulgatus</name>
    <dbReference type="NCBI Taxonomy" id="435590"/>
    <lineage>
        <taxon>Bacteria</taxon>
        <taxon>Pseudomonadati</taxon>
        <taxon>Bacteroidota</taxon>
        <taxon>Bacteroidia</taxon>
        <taxon>Bacteroidales</taxon>
        <taxon>Bacteroidaceae</taxon>
        <taxon>Phocaeicola</taxon>
    </lineage>
</organism>
<proteinExistence type="inferred from homology"/>
<accession>A6L7M8</accession>